<protein>
    <recommendedName>
        <fullName>Angiopoietin-related protein 6</fullName>
    </recommendedName>
    <alternativeName>
        <fullName>Angiopoietin-like protein 6</fullName>
    </alternativeName>
    <alternativeName>
        <fullName>Angiopoietin-related growth factor</fullName>
    </alternativeName>
    <alternativeName>
        <fullName>Angiopoietin-related protein 5</fullName>
    </alternativeName>
</protein>
<name>ANGL6_HUMAN</name>
<dbReference type="EMBL" id="AB054064">
    <property type="protein sequence ID" value="BAB91248.1"/>
    <property type="molecule type" value="mRNA"/>
</dbReference>
<dbReference type="EMBL" id="AF230330">
    <property type="protein sequence ID" value="AAK06404.1"/>
    <property type="molecule type" value="mRNA"/>
</dbReference>
<dbReference type="EMBL" id="AY358276">
    <property type="protein sequence ID" value="AAQ88643.1"/>
    <property type="molecule type" value="mRNA"/>
</dbReference>
<dbReference type="EMBL" id="CH471106">
    <property type="protein sequence ID" value="EAW84071.1"/>
    <property type="molecule type" value="Genomic_DNA"/>
</dbReference>
<dbReference type="EMBL" id="BC142632">
    <property type="protein sequence ID" value="AAI42633.1"/>
    <property type="molecule type" value="mRNA"/>
</dbReference>
<dbReference type="CCDS" id="CCDS12224.1"/>
<dbReference type="RefSeq" id="NP_001308340.1">
    <property type="nucleotide sequence ID" value="NM_001321411.2"/>
</dbReference>
<dbReference type="RefSeq" id="NP_001374276.1">
    <property type="nucleotide sequence ID" value="NM_001387347.1"/>
</dbReference>
<dbReference type="RefSeq" id="NP_001374277.1">
    <property type="nucleotide sequence ID" value="NM_001387348.1"/>
</dbReference>
<dbReference type="RefSeq" id="NP_114123.2">
    <property type="nucleotide sequence ID" value="NM_031917.2"/>
</dbReference>
<dbReference type="RefSeq" id="XP_011526649.1">
    <property type="nucleotide sequence ID" value="XM_011528347.2"/>
</dbReference>
<dbReference type="RefSeq" id="XP_011526652.1">
    <property type="nucleotide sequence ID" value="XM_011528350.2"/>
</dbReference>
<dbReference type="RefSeq" id="XP_016882836.1">
    <property type="nucleotide sequence ID" value="XM_017027347.1"/>
</dbReference>
<dbReference type="PDB" id="6Y43">
    <property type="method" value="X-ray"/>
    <property type="resolution" value="1.60 A"/>
    <property type="chains" value="A=251-470"/>
</dbReference>
<dbReference type="PDBsum" id="6Y43"/>
<dbReference type="SMR" id="Q8NI99"/>
<dbReference type="BioGRID" id="123770">
    <property type="interactions" value="3"/>
</dbReference>
<dbReference type="FunCoup" id="Q8NI99">
    <property type="interactions" value="60"/>
</dbReference>
<dbReference type="IntAct" id="Q8NI99">
    <property type="interactions" value="2"/>
</dbReference>
<dbReference type="STRING" id="9606.ENSP00000253109"/>
<dbReference type="UniLectin" id="Q8NI99"/>
<dbReference type="GlyConnect" id="1919">
    <property type="glycosylation" value="5 N-Linked glycans (2 sites)"/>
</dbReference>
<dbReference type="GlyCosmos" id="Q8NI99">
    <property type="glycosylation" value="3 sites, 6 glycans"/>
</dbReference>
<dbReference type="GlyGen" id="Q8NI99">
    <property type="glycosylation" value="4 sites, 9 N-linked glycans (2 sites), 2 O-linked glycans (2 sites)"/>
</dbReference>
<dbReference type="iPTMnet" id="Q8NI99"/>
<dbReference type="PhosphoSitePlus" id="Q8NI99"/>
<dbReference type="BioMuta" id="ANGPTL6"/>
<dbReference type="DMDM" id="66774050"/>
<dbReference type="MassIVE" id="Q8NI99"/>
<dbReference type="PaxDb" id="9606-ENSP00000253109"/>
<dbReference type="PeptideAtlas" id="Q8NI99"/>
<dbReference type="ProteomicsDB" id="73838"/>
<dbReference type="Pumba" id="Q8NI99"/>
<dbReference type="Antibodypedia" id="25178">
    <property type="antibodies" value="176 antibodies from 27 providers"/>
</dbReference>
<dbReference type="DNASU" id="83854"/>
<dbReference type="Ensembl" id="ENST00000253109.5">
    <property type="protein sequence ID" value="ENSP00000253109.3"/>
    <property type="gene ID" value="ENSG00000130812.11"/>
</dbReference>
<dbReference type="Ensembl" id="ENST00000592641.5">
    <property type="protein sequence ID" value="ENSP00000467930.1"/>
    <property type="gene ID" value="ENSG00000130812.11"/>
</dbReference>
<dbReference type="GeneID" id="83854"/>
<dbReference type="KEGG" id="hsa:83854"/>
<dbReference type="MANE-Select" id="ENST00000253109.5">
    <property type="protein sequence ID" value="ENSP00000253109.3"/>
    <property type="RefSeq nucleotide sequence ID" value="NM_031917.3"/>
    <property type="RefSeq protein sequence ID" value="NP_114123.2"/>
</dbReference>
<dbReference type="UCSC" id="uc002mmx.3">
    <property type="organism name" value="human"/>
</dbReference>
<dbReference type="AGR" id="HGNC:23140"/>
<dbReference type="CTD" id="83854"/>
<dbReference type="DisGeNET" id="83854"/>
<dbReference type="GeneCards" id="ANGPTL6"/>
<dbReference type="HGNC" id="HGNC:23140">
    <property type="gene designation" value="ANGPTL6"/>
</dbReference>
<dbReference type="HPA" id="ENSG00000130812">
    <property type="expression patterns" value="Tissue enriched (liver)"/>
</dbReference>
<dbReference type="MalaCards" id="ANGPTL6"/>
<dbReference type="MIM" id="609336">
    <property type="type" value="gene"/>
</dbReference>
<dbReference type="neXtProt" id="NX_Q8NI99"/>
<dbReference type="OpenTargets" id="ENSG00000130812"/>
<dbReference type="Orphanet" id="231160">
    <property type="disease" value="Familial cerebral saccular aneurysm"/>
</dbReference>
<dbReference type="PharmGKB" id="PA134950669"/>
<dbReference type="VEuPathDB" id="HostDB:ENSG00000130812"/>
<dbReference type="eggNOG" id="KOG2579">
    <property type="taxonomic scope" value="Eukaryota"/>
</dbReference>
<dbReference type="GeneTree" id="ENSGT00940000160969"/>
<dbReference type="HOGENOM" id="CLU_038628_0_1_1"/>
<dbReference type="InParanoid" id="Q8NI99"/>
<dbReference type="OMA" id="PVWCEQQ"/>
<dbReference type="OrthoDB" id="7735550at2759"/>
<dbReference type="PAN-GO" id="Q8NI99">
    <property type="GO annotations" value="3 GO annotations based on evolutionary models"/>
</dbReference>
<dbReference type="PhylomeDB" id="Q8NI99"/>
<dbReference type="PathwayCommons" id="Q8NI99"/>
<dbReference type="BioGRID-ORCS" id="83854">
    <property type="hits" value="20 hits in 1144 CRISPR screens"/>
</dbReference>
<dbReference type="ChiTaRS" id="ANGPTL6">
    <property type="organism name" value="human"/>
</dbReference>
<dbReference type="GenomeRNAi" id="83854"/>
<dbReference type="Pharos" id="Q8NI99">
    <property type="development level" value="Tbio"/>
</dbReference>
<dbReference type="PRO" id="PR:Q8NI99"/>
<dbReference type="Proteomes" id="UP000005640">
    <property type="component" value="Chromosome 19"/>
</dbReference>
<dbReference type="RNAct" id="Q8NI99">
    <property type="molecule type" value="protein"/>
</dbReference>
<dbReference type="Bgee" id="ENSG00000130812">
    <property type="expression patterns" value="Expressed in right lobe of liver and 104 other cell types or tissues"/>
</dbReference>
<dbReference type="ExpressionAtlas" id="Q8NI99">
    <property type="expression patterns" value="baseline and differential"/>
</dbReference>
<dbReference type="GO" id="GO:0062023">
    <property type="term" value="C:collagen-containing extracellular matrix"/>
    <property type="evidence" value="ECO:0007005"/>
    <property type="project" value="BHF-UCL"/>
</dbReference>
<dbReference type="GO" id="GO:0070062">
    <property type="term" value="C:extracellular exosome"/>
    <property type="evidence" value="ECO:0007005"/>
    <property type="project" value="UniProtKB"/>
</dbReference>
<dbReference type="GO" id="GO:0005615">
    <property type="term" value="C:extracellular space"/>
    <property type="evidence" value="ECO:0000318"/>
    <property type="project" value="GO_Central"/>
</dbReference>
<dbReference type="GO" id="GO:0030141">
    <property type="term" value="C:secretory granule"/>
    <property type="evidence" value="ECO:0007669"/>
    <property type="project" value="Ensembl"/>
</dbReference>
<dbReference type="GO" id="GO:0005102">
    <property type="term" value="F:signaling receptor binding"/>
    <property type="evidence" value="ECO:0000318"/>
    <property type="project" value="GO_Central"/>
</dbReference>
<dbReference type="GO" id="GO:0001525">
    <property type="term" value="P:angiogenesis"/>
    <property type="evidence" value="ECO:0007669"/>
    <property type="project" value="UniProtKB-KW"/>
</dbReference>
<dbReference type="GO" id="GO:0007596">
    <property type="term" value="P:blood coagulation"/>
    <property type="evidence" value="ECO:0007669"/>
    <property type="project" value="InterPro"/>
</dbReference>
<dbReference type="GO" id="GO:0030154">
    <property type="term" value="P:cell differentiation"/>
    <property type="evidence" value="ECO:0007669"/>
    <property type="project" value="UniProtKB-KW"/>
</dbReference>
<dbReference type="CDD" id="cd00087">
    <property type="entry name" value="FReD"/>
    <property type="match status" value="1"/>
</dbReference>
<dbReference type="FunFam" id="3.90.215.10:FF:000001">
    <property type="entry name" value="Tenascin isoform 1"/>
    <property type="match status" value="1"/>
</dbReference>
<dbReference type="Gene3D" id="3.90.215.10">
    <property type="entry name" value="Gamma Fibrinogen, chain A, domain 1"/>
    <property type="match status" value="1"/>
</dbReference>
<dbReference type="InterPro" id="IPR037579">
    <property type="entry name" value="FIB_ANG-like"/>
</dbReference>
<dbReference type="InterPro" id="IPR036056">
    <property type="entry name" value="Fibrinogen-like_C"/>
</dbReference>
<dbReference type="InterPro" id="IPR014716">
    <property type="entry name" value="Fibrinogen_a/b/g_C_1"/>
</dbReference>
<dbReference type="InterPro" id="IPR002181">
    <property type="entry name" value="Fibrinogen_a/b/g_C_dom"/>
</dbReference>
<dbReference type="InterPro" id="IPR020837">
    <property type="entry name" value="Fibrinogen_CS"/>
</dbReference>
<dbReference type="PANTHER" id="PTHR47221">
    <property type="entry name" value="FIBRINOGEN ALPHA CHAIN"/>
    <property type="match status" value="1"/>
</dbReference>
<dbReference type="PANTHER" id="PTHR47221:SF5">
    <property type="entry name" value="FIBRINOGEN C-TERMINAL DOMAIN-CONTAINING PROTEIN"/>
    <property type="match status" value="1"/>
</dbReference>
<dbReference type="Pfam" id="PF00147">
    <property type="entry name" value="Fibrinogen_C"/>
    <property type="match status" value="1"/>
</dbReference>
<dbReference type="SMART" id="SM00186">
    <property type="entry name" value="FBG"/>
    <property type="match status" value="1"/>
</dbReference>
<dbReference type="SUPFAM" id="SSF56496">
    <property type="entry name" value="Fibrinogen C-terminal domain-like"/>
    <property type="match status" value="1"/>
</dbReference>
<dbReference type="PROSITE" id="PS00514">
    <property type="entry name" value="FIBRINOGEN_C_1"/>
    <property type="match status" value="1"/>
</dbReference>
<dbReference type="PROSITE" id="PS51406">
    <property type="entry name" value="FIBRINOGEN_C_2"/>
    <property type="match status" value="1"/>
</dbReference>
<accession>Q8NI99</accession>
<accession>A5PKV7</accession>
<accession>Q9BZZ0</accession>
<organism>
    <name type="scientific">Homo sapiens</name>
    <name type="common">Human</name>
    <dbReference type="NCBI Taxonomy" id="9606"/>
    <lineage>
        <taxon>Eukaryota</taxon>
        <taxon>Metazoa</taxon>
        <taxon>Chordata</taxon>
        <taxon>Craniata</taxon>
        <taxon>Vertebrata</taxon>
        <taxon>Euteleostomi</taxon>
        <taxon>Mammalia</taxon>
        <taxon>Eutheria</taxon>
        <taxon>Euarchontoglires</taxon>
        <taxon>Primates</taxon>
        <taxon>Haplorrhini</taxon>
        <taxon>Catarrhini</taxon>
        <taxon>Hominidae</taxon>
        <taxon>Homo</taxon>
    </lineage>
</organism>
<keyword id="KW-0002">3D-structure</keyword>
<keyword id="KW-0037">Angiogenesis</keyword>
<keyword id="KW-0175">Coiled coil</keyword>
<keyword id="KW-0217">Developmental protein</keyword>
<keyword id="KW-0221">Differentiation</keyword>
<keyword id="KW-1015">Disulfide bond</keyword>
<keyword id="KW-0325">Glycoprotein</keyword>
<keyword id="KW-1267">Proteomics identification</keyword>
<keyword id="KW-1185">Reference proteome</keyword>
<keyword id="KW-0964">Secreted</keyword>
<keyword id="KW-0732">Signal</keyword>
<reference key="1">
    <citation type="journal article" date="2003" name="Proc. Natl. Acad. Sci. U.S.A.">
        <title>Angiopoietin-related growth factor (AGF) promotes epidermal proliferation, remodeling, and regeneration.</title>
        <authorList>
            <person name="Oike Y."/>
            <person name="Yasunaga K."/>
            <person name="Ito Y."/>
            <person name="Matsumoto S."/>
            <person name="Maekawa H."/>
            <person name="Morisada T."/>
            <person name="Arai F."/>
            <person name="Nakagata N."/>
            <person name="Takeya M."/>
            <person name="Masuho Y."/>
            <person name="Suda T."/>
        </authorList>
    </citation>
    <scope>NUCLEOTIDE SEQUENCE [MRNA]</scope>
</reference>
<reference key="2">
    <citation type="submission" date="2000-02" db="EMBL/GenBank/DDBJ databases">
        <title>Molecular cloning of a novel angiopoietin-related protein.</title>
        <authorList>
            <person name="Samal B."/>
            <person name="Wu C."/>
            <person name="Dias P."/>
            <person name="Singh S."/>
        </authorList>
    </citation>
    <scope>NUCLEOTIDE SEQUENCE [MRNA]</scope>
</reference>
<reference key="3">
    <citation type="journal article" date="2003" name="Genome Res.">
        <title>The secreted protein discovery initiative (SPDI), a large-scale effort to identify novel human secreted and transmembrane proteins: a bioinformatics assessment.</title>
        <authorList>
            <person name="Clark H.F."/>
            <person name="Gurney A.L."/>
            <person name="Abaya E."/>
            <person name="Baker K."/>
            <person name="Baldwin D.T."/>
            <person name="Brush J."/>
            <person name="Chen J."/>
            <person name="Chow B."/>
            <person name="Chui C."/>
            <person name="Crowley C."/>
            <person name="Currell B."/>
            <person name="Deuel B."/>
            <person name="Dowd P."/>
            <person name="Eaton D."/>
            <person name="Foster J.S."/>
            <person name="Grimaldi C."/>
            <person name="Gu Q."/>
            <person name="Hass P.E."/>
            <person name="Heldens S."/>
            <person name="Huang A."/>
            <person name="Kim H.S."/>
            <person name="Klimowski L."/>
            <person name="Jin Y."/>
            <person name="Johnson S."/>
            <person name="Lee J."/>
            <person name="Lewis L."/>
            <person name="Liao D."/>
            <person name="Mark M.R."/>
            <person name="Robbie E."/>
            <person name="Sanchez C."/>
            <person name="Schoenfeld J."/>
            <person name="Seshagiri S."/>
            <person name="Simmons L."/>
            <person name="Singh J."/>
            <person name="Smith V."/>
            <person name="Stinson J."/>
            <person name="Vagts A."/>
            <person name="Vandlen R.L."/>
            <person name="Watanabe C."/>
            <person name="Wieand D."/>
            <person name="Woods K."/>
            <person name="Xie M.-H."/>
            <person name="Yansura D.G."/>
            <person name="Yi S."/>
            <person name="Yu G."/>
            <person name="Yuan J."/>
            <person name="Zhang M."/>
            <person name="Zhang Z."/>
            <person name="Goddard A.D."/>
            <person name="Wood W.I."/>
            <person name="Godowski P.J."/>
            <person name="Gray A.M."/>
        </authorList>
    </citation>
    <scope>NUCLEOTIDE SEQUENCE [LARGE SCALE MRNA]</scope>
</reference>
<reference key="4">
    <citation type="submission" date="2005-07" db="EMBL/GenBank/DDBJ databases">
        <authorList>
            <person name="Mural R.J."/>
            <person name="Istrail S."/>
            <person name="Sutton G.G."/>
            <person name="Florea L."/>
            <person name="Halpern A.L."/>
            <person name="Mobarry C.M."/>
            <person name="Lippert R."/>
            <person name="Walenz B."/>
            <person name="Shatkay H."/>
            <person name="Dew I."/>
            <person name="Miller J.R."/>
            <person name="Flanigan M.J."/>
            <person name="Edwards N.J."/>
            <person name="Bolanos R."/>
            <person name="Fasulo D."/>
            <person name="Halldorsson B.V."/>
            <person name="Hannenhalli S."/>
            <person name="Turner R."/>
            <person name="Yooseph S."/>
            <person name="Lu F."/>
            <person name="Nusskern D.R."/>
            <person name="Shue B.C."/>
            <person name="Zheng X.H."/>
            <person name="Zhong F."/>
            <person name="Delcher A.L."/>
            <person name="Huson D.H."/>
            <person name="Kravitz S.A."/>
            <person name="Mouchard L."/>
            <person name="Reinert K."/>
            <person name="Remington K.A."/>
            <person name="Clark A.G."/>
            <person name="Waterman M.S."/>
            <person name="Eichler E.E."/>
            <person name="Adams M.D."/>
            <person name="Hunkapiller M.W."/>
            <person name="Myers E.W."/>
            <person name="Venter J.C."/>
        </authorList>
    </citation>
    <scope>NUCLEOTIDE SEQUENCE [LARGE SCALE GENOMIC DNA]</scope>
</reference>
<reference key="5">
    <citation type="journal article" date="2004" name="Genome Res.">
        <title>The status, quality, and expansion of the NIH full-length cDNA project: the Mammalian Gene Collection (MGC).</title>
        <authorList>
            <consortium name="The MGC Project Team"/>
        </authorList>
    </citation>
    <scope>NUCLEOTIDE SEQUENCE [LARGE SCALE MRNA]</scope>
</reference>
<reference key="6">
    <citation type="journal article" date="2005" name="J. Proteome Res.">
        <title>Human plasma N-glycoproteome analysis by immunoaffinity subtraction, hydrazide chemistry, and mass spectrometry.</title>
        <authorList>
            <person name="Liu T."/>
            <person name="Qian W.-J."/>
            <person name="Gritsenko M.A."/>
            <person name="Camp D.G. II"/>
            <person name="Monroe M.E."/>
            <person name="Moore R.J."/>
            <person name="Smith R.D."/>
        </authorList>
    </citation>
    <scope>GLYCOSYLATION [LARGE SCALE ANALYSIS] AT ASN-145</scope>
    <source>
        <tissue>Plasma</tissue>
    </source>
</reference>
<reference key="7">
    <citation type="journal article" date="2009" name="J. Proteome Res.">
        <title>Glycoproteomics analysis of human liver tissue by combination of multiple enzyme digestion and hydrazide chemistry.</title>
        <authorList>
            <person name="Chen R."/>
            <person name="Jiang X."/>
            <person name="Sun D."/>
            <person name="Han G."/>
            <person name="Wang F."/>
            <person name="Ye M."/>
            <person name="Wang L."/>
            <person name="Zou H."/>
        </authorList>
    </citation>
    <scope>GLYCOSYLATION [LARGE SCALE ANALYSIS] AT ASN-58 AND ASN-145</scope>
    <source>
        <tissue>Liver</tissue>
    </source>
</reference>
<reference key="8">
    <citation type="journal article" date="2009" name="Mol. Cell. Proteomics">
        <title>A strategy for precise and large scale identification of core fucosylated glycoproteins.</title>
        <authorList>
            <person name="Jia W."/>
            <person name="Lu Z."/>
            <person name="Fu Y."/>
            <person name="Wang H.P."/>
            <person name="Wang L.H."/>
            <person name="Chi H."/>
            <person name="Yuan Z.F."/>
            <person name="Zheng Z.B."/>
            <person name="Song L.N."/>
            <person name="Han H.H."/>
            <person name="Liang Y.M."/>
            <person name="Wang J.L."/>
            <person name="Cai Y."/>
            <person name="Zhang Y.K."/>
            <person name="Deng Y.L."/>
            <person name="Ying W.T."/>
            <person name="He S.M."/>
            <person name="Qian X.H."/>
        </authorList>
    </citation>
    <scope>GLYCOSYLATION AT ASN-145</scope>
</reference>
<sequence>MGKPWLRALQLLLLLGASWARAGAPRCTYTFVLPPQKFTGAVCWSGPASTRATPEAANASELAALRMRVGRHEELLRELQRLAAADGAVAGEVRALRKESRGLSARLGQLRAQLQHEAGPGAGPGADLGAEPAAALALLGERVLNASAEAQRAAARFHQLDVKFRELAQLVTQQSSLIARLERLCPGGAGGQQQVLPPPPLVPVVPVRLVGSTSDTSRMLDPAPEPQRDQTQRQQEPMASPMPAGHPAVPTKPVGPWQDCAEARQAGHEQSGVYELRVGRHVVSVWCEQQLEGGGWTVIQRRQDGSVNFFTTWQHYKAGFGRPDGEYWLGLEPVYQLTSRGDHELLVLLEDWGGRGARAHYDGFSLEPESDHYRLRLGQYHGDAGDSLSWHNDKPFSTVDRDRDSYSGNCALYQRGGWWYHACAHSNLNGVWHHGGHYRSRYQDGVYWAEFRGGAYSLRKAAMLIRPLKL</sequence>
<evidence type="ECO:0000255" key="1"/>
<evidence type="ECO:0000255" key="2">
    <source>
        <dbReference type="PROSITE-ProRule" id="PRU00739"/>
    </source>
</evidence>
<evidence type="ECO:0000256" key="3">
    <source>
        <dbReference type="SAM" id="MobiDB-lite"/>
    </source>
</evidence>
<evidence type="ECO:0000269" key="4">
    <source>
    </source>
</evidence>
<evidence type="ECO:0000269" key="5">
    <source>
    </source>
</evidence>
<evidence type="ECO:0000269" key="6">
    <source>
    </source>
</evidence>
<evidence type="ECO:0000305" key="7"/>
<evidence type="ECO:0007829" key="8">
    <source>
        <dbReference type="PDB" id="6Y43"/>
    </source>
</evidence>
<gene>
    <name type="primary">ANGPTL6</name>
    <name type="synonym">AGF</name>
    <name type="synonym">ARP5</name>
    <name type="ORF">UNQ152/PRO178</name>
</gene>
<comment type="function">
    <text>May play a role in the wound healing process. May promote epidermal proliferation, remodeling and regeneration. May promote the chemotactic activity of endothelial cells and induce neovascularization. May counteract high-fat diet-induced obesity and related insulin resistance through increased energy expenditure.</text>
</comment>
<comment type="subcellular location">
    <subcellularLocation>
        <location evidence="7">Secreted</location>
    </subcellularLocation>
</comment>
<feature type="signal peptide" evidence="1">
    <location>
        <begin position="1"/>
        <end position="20"/>
    </location>
</feature>
<feature type="chain" id="PRO_0000009128" description="Angiopoietin-related protein 6">
    <location>
        <begin position="21"/>
        <end position="470"/>
    </location>
</feature>
<feature type="domain" description="Fibrinogen C-terminal" evidence="2">
    <location>
        <begin position="251"/>
        <end position="469"/>
    </location>
</feature>
<feature type="region of interest" description="Disordered" evidence="3">
    <location>
        <begin position="214"/>
        <end position="249"/>
    </location>
</feature>
<feature type="coiled-coil region" evidence="1">
    <location>
        <begin position="59"/>
        <end position="116"/>
    </location>
</feature>
<feature type="glycosylation site" description="N-linked (GlcNAc...) asparagine" evidence="6">
    <location>
        <position position="58"/>
    </location>
</feature>
<feature type="glycosylation site" description="N-linked (GlcNAc...) (complex) asparagine" evidence="4 5 6">
    <location>
        <position position="145"/>
    </location>
</feature>
<feature type="disulfide bond" evidence="2">
    <location>
        <begin position="260"/>
        <end position="287"/>
    </location>
</feature>
<feature type="disulfide bond" evidence="2">
    <location>
        <begin position="410"/>
        <end position="423"/>
    </location>
</feature>
<feature type="sequence conflict" description="In Ref. 2; AAK06404." evidence="7" ref="2">
    <original>E</original>
    <variation>K</variation>
    <location>
        <position position="92"/>
    </location>
</feature>
<feature type="strand" evidence="8">
    <location>
        <begin position="257"/>
        <end position="259"/>
    </location>
</feature>
<feature type="helix" evidence="8">
    <location>
        <begin position="260"/>
        <end position="265"/>
    </location>
</feature>
<feature type="strand" evidence="8">
    <location>
        <begin position="272"/>
        <end position="278"/>
    </location>
</feature>
<feature type="strand" evidence="8">
    <location>
        <begin position="281"/>
        <end position="288"/>
    </location>
</feature>
<feature type="helix" evidence="8">
    <location>
        <begin position="291"/>
        <end position="293"/>
    </location>
</feature>
<feature type="strand" evidence="8">
    <location>
        <begin position="296"/>
        <end position="305"/>
    </location>
</feature>
<feature type="helix" evidence="8">
    <location>
        <begin position="313"/>
        <end position="318"/>
    </location>
</feature>
<feature type="strand" evidence="8">
    <location>
        <begin position="325"/>
        <end position="328"/>
    </location>
</feature>
<feature type="helix" evidence="8">
    <location>
        <begin position="331"/>
        <end position="338"/>
    </location>
</feature>
<feature type="strand" evidence="8">
    <location>
        <begin position="343"/>
        <end position="350"/>
    </location>
</feature>
<feature type="strand" evidence="8">
    <location>
        <begin position="356"/>
        <end position="366"/>
    </location>
</feature>
<feature type="helix" evidence="8">
    <location>
        <begin position="369"/>
        <end position="371"/>
    </location>
</feature>
<feature type="strand" evidence="8">
    <location>
        <begin position="375"/>
        <end position="381"/>
    </location>
</feature>
<feature type="helix" evidence="8">
    <location>
        <begin position="389"/>
        <end position="391"/>
    </location>
</feature>
<feature type="strand" evidence="8">
    <location>
        <begin position="404"/>
        <end position="408"/>
    </location>
</feature>
<feature type="helix" evidence="8">
    <location>
        <begin position="410"/>
        <end position="414"/>
    </location>
</feature>
<feature type="strand" evidence="8">
    <location>
        <begin position="421"/>
        <end position="423"/>
    </location>
</feature>
<feature type="strand" evidence="8">
    <location>
        <begin position="434"/>
        <end position="436"/>
    </location>
</feature>
<feature type="turn" evidence="8">
    <location>
        <begin position="449"/>
        <end position="452"/>
    </location>
</feature>
<feature type="strand" evidence="8">
    <location>
        <begin position="459"/>
        <end position="467"/>
    </location>
</feature>
<proteinExistence type="evidence at protein level"/>